<gene>
    <name evidence="1" type="primary">alaS</name>
    <name type="ordered locus">Caul_1394</name>
</gene>
<name>SYA_CAUSK</name>
<organism>
    <name type="scientific">Caulobacter sp. (strain K31)</name>
    <dbReference type="NCBI Taxonomy" id="366602"/>
    <lineage>
        <taxon>Bacteria</taxon>
        <taxon>Pseudomonadati</taxon>
        <taxon>Pseudomonadota</taxon>
        <taxon>Alphaproteobacteria</taxon>
        <taxon>Caulobacterales</taxon>
        <taxon>Caulobacteraceae</taxon>
        <taxon>Caulobacter</taxon>
    </lineage>
</organism>
<accession>B0SZN4</accession>
<comment type="function">
    <text evidence="1">Catalyzes the attachment of alanine to tRNA(Ala) in a two-step reaction: alanine is first activated by ATP to form Ala-AMP and then transferred to the acceptor end of tRNA(Ala). Also edits incorrectly charged Ser-tRNA(Ala) and Gly-tRNA(Ala) via its editing domain.</text>
</comment>
<comment type="catalytic activity">
    <reaction evidence="1">
        <text>tRNA(Ala) + L-alanine + ATP = L-alanyl-tRNA(Ala) + AMP + diphosphate</text>
        <dbReference type="Rhea" id="RHEA:12540"/>
        <dbReference type="Rhea" id="RHEA-COMP:9657"/>
        <dbReference type="Rhea" id="RHEA-COMP:9923"/>
        <dbReference type="ChEBI" id="CHEBI:30616"/>
        <dbReference type="ChEBI" id="CHEBI:33019"/>
        <dbReference type="ChEBI" id="CHEBI:57972"/>
        <dbReference type="ChEBI" id="CHEBI:78442"/>
        <dbReference type="ChEBI" id="CHEBI:78497"/>
        <dbReference type="ChEBI" id="CHEBI:456215"/>
        <dbReference type="EC" id="6.1.1.7"/>
    </reaction>
</comment>
<comment type="cofactor">
    <cofactor evidence="1">
        <name>Zn(2+)</name>
        <dbReference type="ChEBI" id="CHEBI:29105"/>
    </cofactor>
    <text evidence="1">Binds 1 zinc ion per subunit.</text>
</comment>
<comment type="subcellular location">
    <subcellularLocation>
        <location evidence="1">Cytoplasm</location>
    </subcellularLocation>
</comment>
<comment type="domain">
    <text evidence="1">Consists of three domains; the N-terminal catalytic domain, the editing domain and the C-terminal C-Ala domain. The editing domain removes incorrectly charged amino acids, while the C-Ala domain, along with tRNA(Ala), serves as a bridge to cooperatively bring together the editing and aminoacylation centers thus stimulating deacylation of misacylated tRNAs.</text>
</comment>
<comment type="similarity">
    <text evidence="1">Belongs to the class-II aminoacyl-tRNA synthetase family.</text>
</comment>
<evidence type="ECO:0000255" key="1">
    <source>
        <dbReference type="HAMAP-Rule" id="MF_00036"/>
    </source>
</evidence>
<keyword id="KW-0030">Aminoacyl-tRNA synthetase</keyword>
<keyword id="KW-0067">ATP-binding</keyword>
<keyword id="KW-0963">Cytoplasm</keyword>
<keyword id="KW-0436">Ligase</keyword>
<keyword id="KW-0479">Metal-binding</keyword>
<keyword id="KW-0547">Nucleotide-binding</keyword>
<keyword id="KW-0648">Protein biosynthesis</keyword>
<keyword id="KW-0694">RNA-binding</keyword>
<keyword id="KW-0820">tRNA-binding</keyword>
<keyword id="KW-0862">Zinc</keyword>
<sequence length="883" mass="93394">MPSLNEIRSTFLNYFGAADHAIVPSAPLVPQNDPTLLFVNAGMVPFKNVFTGAETPPHPRATSSQKCVRAGGKHNDLDNVGYTARHHTFFEMLGNFSFGDYFKEQAITHAWTLLTRDFALPKDKLLVTVYHTDTEAADLWKKIAGLSDDRIIRIATNDNFWSMGDTGPCGPCSEIFFDHGDHIPGGPPGSPDEDGDRFIEIWNLVFMQFEQMAGGERVSLPKPSIDTGMGLERIAAVMQGVHDNYDIDLFKALIAASVELTGVRAEGAQAPSHRVIADHLRSSSFLLADGVTPSNEGRGYVLRRIMRRAMRHAYLLGANEPLMHRLAPTLVAQMGQAYPELRRAEASIVETLRQEEERFRVTLGRGMGLLDEATAGLSAGGVLDGETAFKLYDTYGFPLDLTQDAVRARGITVDTDGFDVAMDRQRTMARANWAGSGQTGAAAAWFGIKEQSGPTNFVGYDTTETTGTVKAIVLDGAPVEAAQAGASVDVLLDRTSFYAESGGQAGDTGVIEAHGVESRVTDTQKQAGDLYVHRVELAGPLKVGDSVVASVDAARRTTTRANHSAAHLVHAALHHVLGPHVAQKGQMVDGDRMRFDFSHGGPLTADEIERIEAEVNAVIRQNVPAQTKEMAPQEAIEAGAVALFGEKYGDSVRVLTLGESLTETGKAYSVELCGGTHVARTGDIALFKIVSEQGVASGVRRIEALTGEAARRFLLDQAGVAKALADQFKTPVAEVLARVDALVAERKALERQLAEAKKQLALGGGSGGAASGPEDVAGTALIARVLDGVGGKELRGVAEEFKKQLTNGGVVALVGVTDGKAAVTVAVTADLTAKFSAADLAKAAVIAMGGQGAGGKADFAQGGAPDATKAQAGLDAIKAALAG</sequence>
<protein>
    <recommendedName>
        <fullName evidence="1">Alanine--tRNA ligase</fullName>
        <ecNumber evidence="1">6.1.1.7</ecNumber>
    </recommendedName>
    <alternativeName>
        <fullName evidence="1">Alanyl-tRNA synthetase</fullName>
        <shortName evidence="1">AlaRS</shortName>
    </alternativeName>
</protein>
<proteinExistence type="inferred from homology"/>
<feature type="chain" id="PRO_0000347546" description="Alanine--tRNA ligase">
    <location>
        <begin position="1"/>
        <end position="883"/>
    </location>
</feature>
<feature type="binding site" evidence="1">
    <location>
        <position position="563"/>
    </location>
    <ligand>
        <name>Zn(2+)</name>
        <dbReference type="ChEBI" id="CHEBI:29105"/>
    </ligand>
</feature>
<feature type="binding site" evidence="1">
    <location>
        <position position="567"/>
    </location>
    <ligand>
        <name>Zn(2+)</name>
        <dbReference type="ChEBI" id="CHEBI:29105"/>
    </ligand>
</feature>
<feature type="binding site" evidence="1">
    <location>
        <position position="673"/>
    </location>
    <ligand>
        <name>Zn(2+)</name>
        <dbReference type="ChEBI" id="CHEBI:29105"/>
    </ligand>
</feature>
<feature type="binding site" evidence="1">
    <location>
        <position position="677"/>
    </location>
    <ligand>
        <name>Zn(2+)</name>
        <dbReference type="ChEBI" id="CHEBI:29105"/>
    </ligand>
</feature>
<dbReference type="EC" id="6.1.1.7" evidence="1"/>
<dbReference type="EMBL" id="CP000927">
    <property type="protein sequence ID" value="ABZ70524.1"/>
    <property type="molecule type" value="Genomic_DNA"/>
</dbReference>
<dbReference type="SMR" id="B0SZN4"/>
<dbReference type="STRING" id="366602.Caul_1394"/>
<dbReference type="KEGG" id="cak:Caul_1394"/>
<dbReference type="eggNOG" id="COG0013">
    <property type="taxonomic scope" value="Bacteria"/>
</dbReference>
<dbReference type="HOGENOM" id="CLU_004485_1_1_5"/>
<dbReference type="OrthoDB" id="9803884at2"/>
<dbReference type="GO" id="GO:0005829">
    <property type="term" value="C:cytosol"/>
    <property type="evidence" value="ECO:0007669"/>
    <property type="project" value="TreeGrafter"/>
</dbReference>
<dbReference type="GO" id="GO:0004813">
    <property type="term" value="F:alanine-tRNA ligase activity"/>
    <property type="evidence" value="ECO:0007669"/>
    <property type="project" value="UniProtKB-UniRule"/>
</dbReference>
<dbReference type="GO" id="GO:0002161">
    <property type="term" value="F:aminoacyl-tRNA deacylase activity"/>
    <property type="evidence" value="ECO:0007669"/>
    <property type="project" value="TreeGrafter"/>
</dbReference>
<dbReference type="GO" id="GO:0005524">
    <property type="term" value="F:ATP binding"/>
    <property type="evidence" value="ECO:0007669"/>
    <property type="project" value="UniProtKB-UniRule"/>
</dbReference>
<dbReference type="GO" id="GO:0000049">
    <property type="term" value="F:tRNA binding"/>
    <property type="evidence" value="ECO:0007669"/>
    <property type="project" value="UniProtKB-KW"/>
</dbReference>
<dbReference type="GO" id="GO:0008270">
    <property type="term" value="F:zinc ion binding"/>
    <property type="evidence" value="ECO:0007669"/>
    <property type="project" value="UniProtKB-UniRule"/>
</dbReference>
<dbReference type="GO" id="GO:0006419">
    <property type="term" value="P:alanyl-tRNA aminoacylation"/>
    <property type="evidence" value="ECO:0007669"/>
    <property type="project" value="UniProtKB-UniRule"/>
</dbReference>
<dbReference type="GO" id="GO:0045892">
    <property type="term" value="P:negative regulation of DNA-templated transcription"/>
    <property type="evidence" value="ECO:0007669"/>
    <property type="project" value="TreeGrafter"/>
</dbReference>
<dbReference type="CDD" id="cd00673">
    <property type="entry name" value="AlaRS_core"/>
    <property type="match status" value="1"/>
</dbReference>
<dbReference type="FunFam" id="2.40.30.130:FF:000001">
    <property type="entry name" value="Alanine--tRNA ligase"/>
    <property type="match status" value="1"/>
</dbReference>
<dbReference type="FunFam" id="3.10.310.40:FF:000001">
    <property type="entry name" value="Alanine--tRNA ligase"/>
    <property type="match status" value="1"/>
</dbReference>
<dbReference type="FunFam" id="3.30.54.20:FF:000001">
    <property type="entry name" value="Alanine--tRNA ligase"/>
    <property type="match status" value="1"/>
</dbReference>
<dbReference type="FunFam" id="3.30.930.10:FF:000004">
    <property type="entry name" value="Alanine--tRNA ligase"/>
    <property type="match status" value="1"/>
</dbReference>
<dbReference type="FunFam" id="3.30.980.10:FF:000004">
    <property type="entry name" value="Alanine--tRNA ligase, cytoplasmic"/>
    <property type="match status" value="1"/>
</dbReference>
<dbReference type="Gene3D" id="2.40.30.130">
    <property type="match status" value="1"/>
</dbReference>
<dbReference type="Gene3D" id="3.10.310.40">
    <property type="match status" value="1"/>
</dbReference>
<dbReference type="Gene3D" id="3.30.54.20">
    <property type="match status" value="1"/>
</dbReference>
<dbReference type="Gene3D" id="6.10.250.550">
    <property type="match status" value="1"/>
</dbReference>
<dbReference type="Gene3D" id="3.30.930.10">
    <property type="entry name" value="Bira Bifunctional Protein, Domain 2"/>
    <property type="match status" value="1"/>
</dbReference>
<dbReference type="Gene3D" id="3.30.980.10">
    <property type="entry name" value="Threonyl-trna Synthetase, Chain A, domain 2"/>
    <property type="match status" value="1"/>
</dbReference>
<dbReference type="HAMAP" id="MF_00036_B">
    <property type="entry name" value="Ala_tRNA_synth_B"/>
    <property type="match status" value="1"/>
</dbReference>
<dbReference type="InterPro" id="IPR045864">
    <property type="entry name" value="aa-tRNA-synth_II/BPL/LPL"/>
</dbReference>
<dbReference type="InterPro" id="IPR002318">
    <property type="entry name" value="Ala-tRNA-lgiase_IIc"/>
</dbReference>
<dbReference type="InterPro" id="IPR018162">
    <property type="entry name" value="Ala-tRNA-ligase_IIc_anticod-bd"/>
</dbReference>
<dbReference type="InterPro" id="IPR018165">
    <property type="entry name" value="Ala-tRNA-synth_IIc_core"/>
</dbReference>
<dbReference type="InterPro" id="IPR018164">
    <property type="entry name" value="Ala-tRNA-synth_IIc_N"/>
</dbReference>
<dbReference type="InterPro" id="IPR050058">
    <property type="entry name" value="Ala-tRNA_ligase"/>
</dbReference>
<dbReference type="InterPro" id="IPR023033">
    <property type="entry name" value="Ala_tRNA_ligase_euk/bac"/>
</dbReference>
<dbReference type="InterPro" id="IPR003156">
    <property type="entry name" value="DHHA1_dom"/>
</dbReference>
<dbReference type="InterPro" id="IPR018163">
    <property type="entry name" value="Thr/Ala-tRNA-synth_IIc_edit"/>
</dbReference>
<dbReference type="InterPro" id="IPR009000">
    <property type="entry name" value="Transl_B-barrel_sf"/>
</dbReference>
<dbReference type="InterPro" id="IPR012947">
    <property type="entry name" value="tRNA_SAD"/>
</dbReference>
<dbReference type="NCBIfam" id="TIGR00344">
    <property type="entry name" value="alaS"/>
    <property type="match status" value="1"/>
</dbReference>
<dbReference type="PANTHER" id="PTHR11777:SF9">
    <property type="entry name" value="ALANINE--TRNA LIGASE, CYTOPLASMIC"/>
    <property type="match status" value="1"/>
</dbReference>
<dbReference type="PANTHER" id="PTHR11777">
    <property type="entry name" value="ALANYL-TRNA SYNTHETASE"/>
    <property type="match status" value="1"/>
</dbReference>
<dbReference type="Pfam" id="PF02272">
    <property type="entry name" value="DHHA1"/>
    <property type="match status" value="1"/>
</dbReference>
<dbReference type="Pfam" id="PF01411">
    <property type="entry name" value="tRNA-synt_2c"/>
    <property type="match status" value="1"/>
</dbReference>
<dbReference type="Pfam" id="PF07973">
    <property type="entry name" value="tRNA_SAD"/>
    <property type="match status" value="1"/>
</dbReference>
<dbReference type="PRINTS" id="PR00980">
    <property type="entry name" value="TRNASYNTHALA"/>
</dbReference>
<dbReference type="SMART" id="SM00863">
    <property type="entry name" value="tRNA_SAD"/>
    <property type="match status" value="1"/>
</dbReference>
<dbReference type="SUPFAM" id="SSF55681">
    <property type="entry name" value="Class II aaRS and biotin synthetases"/>
    <property type="match status" value="1"/>
</dbReference>
<dbReference type="SUPFAM" id="SSF101353">
    <property type="entry name" value="Putative anticodon-binding domain of alanyl-tRNA synthetase (AlaRS)"/>
    <property type="match status" value="1"/>
</dbReference>
<dbReference type="SUPFAM" id="SSF55186">
    <property type="entry name" value="ThrRS/AlaRS common domain"/>
    <property type="match status" value="1"/>
</dbReference>
<dbReference type="SUPFAM" id="SSF50447">
    <property type="entry name" value="Translation proteins"/>
    <property type="match status" value="1"/>
</dbReference>
<dbReference type="PROSITE" id="PS50860">
    <property type="entry name" value="AA_TRNA_LIGASE_II_ALA"/>
    <property type="match status" value="1"/>
</dbReference>
<reference key="1">
    <citation type="submission" date="2008-01" db="EMBL/GenBank/DDBJ databases">
        <title>Complete sequence of chromosome of Caulobacter sp. K31.</title>
        <authorList>
            <consortium name="US DOE Joint Genome Institute"/>
            <person name="Copeland A."/>
            <person name="Lucas S."/>
            <person name="Lapidus A."/>
            <person name="Barry K."/>
            <person name="Glavina del Rio T."/>
            <person name="Dalin E."/>
            <person name="Tice H."/>
            <person name="Pitluck S."/>
            <person name="Bruce D."/>
            <person name="Goodwin L."/>
            <person name="Thompson L.S."/>
            <person name="Brettin T."/>
            <person name="Detter J.C."/>
            <person name="Han C."/>
            <person name="Schmutz J."/>
            <person name="Larimer F."/>
            <person name="Land M."/>
            <person name="Hauser L."/>
            <person name="Kyrpides N."/>
            <person name="Kim E."/>
            <person name="Stephens C."/>
            <person name="Richardson P."/>
        </authorList>
    </citation>
    <scope>NUCLEOTIDE SEQUENCE [LARGE SCALE GENOMIC DNA]</scope>
    <source>
        <strain>K31</strain>
    </source>
</reference>